<sequence length="559" mass="60274">MASAGGEVVVVDPAAAAVAPDVEHHAPAPRLTPAGSGGRLMAELLGVFNGLTERMGDDVATSSSWTLLFRALKLALPALRDAAGGRSLARALIVAASLADLQMDAEVISAGIVRQAMDAGAVAMADAEAQLGPGAAALLLESLDVKNAPSRVDVADEEAASAVRNRILSGYDVRAVILELAIRLDAMKHLDGVPKHQQRTTSLEVLKVFAPLAHAVGAGALSKELEDLSFWRLYPQAYAQVDQWLSGQEDDCKRVLATCKDDLLQALAADDELRHTVAGFDVKGRYKSRFSAMKKLVKDGRRPEDVHDILGMRVILDHRAGAGDGHRACIRTHEVIKGMWKDVPARTKDYIARPKGDGYRSLHIAVDMSEPGPEGKKRPLMEVQIRTKEMNDAAVFGHALYKGCLADPEEAKRLKDIMLAAAEVAAQHLRDEPATGDQTGVPAAAAAAASAGNIERAFRLLDKNGDGRISMEELTELMEDLGAGGKDAEELMRLLDDNNDGSLSSDEFALFQKRVELKAKLEDKDDEYKEILRQKLQKVDDTGLIHVYRKNLSDKLVSG</sequence>
<dbReference type="EC" id="2.7.6.5" evidence="4"/>
<dbReference type="EMBL" id="AC137614">
    <property type="protein sequence ID" value="AAT93922.1"/>
    <property type="molecule type" value="Genomic_DNA"/>
</dbReference>
<dbReference type="EMBL" id="AP008211">
    <property type="protein sequence ID" value="BAF16640.1"/>
    <property type="molecule type" value="Genomic_DNA"/>
</dbReference>
<dbReference type="EMBL" id="AP014961">
    <property type="protein sequence ID" value="BAS92406.1"/>
    <property type="molecule type" value="Genomic_DNA"/>
</dbReference>
<dbReference type="EMBL" id="AK058438">
    <property type="protein sequence ID" value="BAG86692.1"/>
    <property type="molecule type" value="mRNA"/>
</dbReference>
<dbReference type="RefSeq" id="XP_015637728.1">
    <property type="nucleotide sequence ID" value="XM_015782242.1"/>
</dbReference>
<dbReference type="SMR" id="Q6ATB2"/>
<dbReference type="STRING" id="39947.Q6ATB2"/>
<dbReference type="PaxDb" id="39947-Q6ATB2"/>
<dbReference type="EnsemblPlants" id="Os05t0161500-01">
    <property type="protein sequence ID" value="Os05t0161500-01"/>
    <property type="gene ID" value="Os05g0161500"/>
</dbReference>
<dbReference type="Gramene" id="Os05t0161500-01">
    <property type="protein sequence ID" value="Os05t0161500-01"/>
    <property type="gene ID" value="Os05g0161500"/>
</dbReference>
<dbReference type="KEGG" id="dosa:Os05g0161500"/>
<dbReference type="eggNOG" id="KOG1157">
    <property type="taxonomic scope" value="Eukaryota"/>
</dbReference>
<dbReference type="HOGENOM" id="CLU_022292_1_0_1"/>
<dbReference type="InParanoid" id="Q6ATB2"/>
<dbReference type="OMA" id="GMWKDVP"/>
<dbReference type="OrthoDB" id="427950at2759"/>
<dbReference type="Proteomes" id="UP000000763">
    <property type="component" value="Chromosome 5"/>
</dbReference>
<dbReference type="Proteomes" id="UP000059680">
    <property type="component" value="Chromosome 5"/>
</dbReference>
<dbReference type="GO" id="GO:0009507">
    <property type="term" value="C:chloroplast"/>
    <property type="evidence" value="ECO:0000318"/>
    <property type="project" value="GO_Central"/>
</dbReference>
<dbReference type="GO" id="GO:0005524">
    <property type="term" value="F:ATP binding"/>
    <property type="evidence" value="ECO:0007669"/>
    <property type="project" value="UniProtKB-KW"/>
</dbReference>
<dbReference type="GO" id="GO:0005509">
    <property type="term" value="F:calcium ion binding"/>
    <property type="evidence" value="ECO:0007669"/>
    <property type="project" value="InterPro"/>
</dbReference>
<dbReference type="GO" id="GO:0005525">
    <property type="term" value="F:GTP binding"/>
    <property type="evidence" value="ECO:0007669"/>
    <property type="project" value="UniProtKB-KW"/>
</dbReference>
<dbReference type="GO" id="GO:0008728">
    <property type="term" value="F:GTP diphosphokinase activity"/>
    <property type="evidence" value="ECO:0000314"/>
    <property type="project" value="UniProtKB"/>
</dbReference>
<dbReference type="GO" id="GO:0016301">
    <property type="term" value="F:kinase activity"/>
    <property type="evidence" value="ECO:0007669"/>
    <property type="project" value="UniProtKB-KW"/>
</dbReference>
<dbReference type="GO" id="GO:0015969">
    <property type="term" value="P:guanosine tetraphosphate metabolic process"/>
    <property type="evidence" value="ECO:0007669"/>
    <property type="project" value="InterPro"/>
</dbReference>
<dbReference type="CDD" id="cd00051">
    <property type="entry name" value="EFh"/>
    <property type="match status" value="1"/>
</dbReference>
<dbReference type="CDD" id="cd05399">
    <property type="entry name" value="NT_Rel-Spo_like"/>
    <property type="match status" value="1"/>
</dbReference>
<dbReference type="FunFam" id="1.10.238.10:FF:000287">
    <property type="entry name" value="Probable GTP diphosphokinase CRSH, chloroplastic"/>
    <property type="match status" value="1"/>
</dbReference>
<dbReference type="FunFam" id="1.10.3210.10:FF:000019">
    <property type="entry name" value="Probable GTP diphosphokinase CRSH, chloroplastic"/>
    <property type="match status" value="1"/>
</dbReference>
<dbReference type="FunFam" id="3.30.460.10:FF:000025">
    <property type="entry name" value="probable GTP diphosphokinase CRSH, chloroplastic"/>
    <property type="match status" value="1"/>
</dbReference>
<dbReference type="Gene3D" id="3.30.460.10">
    <property type="entry name" value="Beta Polymerase, domain 2"/>
    <property type="match status" value="1"/>
</dbReference>
<dbReference type="Gene3D" id="1.10.238.10">
    <property type="entry name" value="EF-hand"/>
    <property type="match status" value="1"/>
</dbReference>
<dbReference type="Gene3D" id="1.10.3210.10">
    <property type="entry name" value="Hypothetical protein af1432"/>
    <property type="match status" value="1"/>
</dbReference>
<dbReference type="InterPro" id="IPR011992">
    <property type="entry name" value="EF-hand-dom_pair"/>
</dbReference>
<dbReference type="InterPro" id="IPR018247">
    <property type="entry name" value="EF_Hand_1_Ca_BS"/>
</dbReference>
<dbReference type="InterPro" id="IPR002048">
    <property type="entry name" value="EF_hand_dom"/>
</dbReference>
<dbReference type="InterPro" id="IPR006674">
    <property type="entry name" value="HD_domain"/>
</dbReference>
<dbReference type="InterPro" id="IPR043519">
    <property type="entry name" value="NT_sf"/>
</dbReference>
<dbReference type="InterPro" id="IPR007685">
    <property type="entry name" value="RelA_SpoT"/>
</dbReference>
<dbReference type="PANTHER" id="PTHR21262:SF12">
    <property type="entry name" value="GTP DIPHOSPHOKINASE CRSH, CHLOROPLASTIC-RELATED"/>
    <property type="match status" value="1"/>
</dbReference>
<dbReference type="PANTHER" id="PTHR21262">
    <property type="entry name" value="GUANOSINE-3',5'-BIS DIPHOSPHATE 3'-PYROPHOSPHOHYDROLASE"/>
    <property type="match status" value="1"/>
</dbReference>
<dbReference type="Pfam" id="PF13499">
    <property type="entry name" value="EF-hand_7"/>
    <property type="match status" value="1"/>
</dbReference>
<dbReference type="Pfam" id="PF13328">
    <property type="entry name" value="HD_4"/>
    <property type="match status" value="1"/>
</dbReference>
<dbReference type="Pfam" id="PF04607">
    <property type="entry name" value="RelA_SpoT"/>
    <property type="match status" value="1"/>
</dbReference>
<dbReference type="SMART" id="SM00054">
    <property type="entry name" value="EFh"/>
    <property type="match status" value="2"/>
</dbReference>
<dbReference type="SMART" id="SM00954">
    <property type="entry name" value="RelA_SpoT"/>
    <property type="match status" value="1"/>
</dbReference>
<dbReference type="SUPFAM" id="SSF47473">
    <property type="entry name" value="EF-hand"/>
    <property type="match status" value="1"/>
</dbReference>
<dbReference type="SUPFAM" id="SSF109604">
    <property type="entry name" value="HD-domain/PDEase-like"/>
    <property type="match status" value="1"/>
</dbReference>
<dbReference type="SUPFAM" id="SSF81301">
    <property type="entry name" value="Nucleotidyltransferase"/>
    <property type="match status" value="1"/>
</dbReference>
<dbReference type="PROSITE" id="PS00018">
    <property type="entry name" value="EF_HAND_1"/>
    <property type="match status" value="2"/>
</dbReference>
<dbReference type="PROSITE" id="PS50222">
    <property type="entry name" value="EF_HAND_2"/>
    <property type="match status" value="2"/>
</dbReference>
<dbReference type="PROSITE" id="PS51831">
    <property type="entry name" value="HD"/>
    <property type="match status" value="1"/>
</dbReference>
<organism>
    <name type="scientific">Oryza sativa subsp. japonica</name>
    <name type="common">Rice</name>
    <dbReference type="NCBI Taxonomy" id="39947"/>
    <lineage>
        <taxon>Eukaryota</taxon>
        <taxon>Viridiplantae</taxon>
        <taxon>Streptophyta</taxon>
        <taxon>Embryophyta</taxon>
        <taxon>Tracheophyta</taxon>
        <taxon>Spermatophyta</taxon>
        <taxon>Magnoliopsida</taxon>
        <taxon>Liliopsida</taxon>
        <taxon>Poales</taxon>
        <taxon>Poaceae</taxon>
        <taxon>BOP clade</taxon>
        <taxon>Oryzoideae</taxon>
        <taxon>Oryzeae</taxon>
        <taxon>Oryzinae</taxon>
        <taxon>Oryza</taxon>
        <taxon>Oryza sativa</taxon>
    </lineage>
</organism>
<reference key="1">
    <citation type="journal article" date="2005" name="Mol. Genet. Genomics">
        <title>A fine physical map of the rice chromosome 5.</title>
        <authorList>
            <person name="Cheng C.-H."/>
            <person name="Chung M.C."/>
            <person name="Liu S.-M."/>
            <person name="Chen S.-K."/>
            <person name="Kao F.Y."/>
            <person name="Lin S.-J."/>
            <person name="Hsiao S.-H."/>
            <person name="Tseng I.C."/>
            <person name="Hsing Y.-I.C."/>
            <person name="Wu H.-P."/>
            <person name="Chen C.-S."/>
            <person name="Shaw J.-F."/>
            <person name="Wu J."/>
            <person name="Matsumoto T."/>
            <person name="Sasaki T."/>
            <person name="Chen H.-C."/>
            <person name="Chow T.-Y."/>
        </authorList>
    </citation>
    <scope>NUCLEOTIDE SEQUENCE [LARGE SCALE GENOMIC DNA]</scope>
    <source>
        <strain>cv. Nipponbare</strain>
    </source>
</reference>
<reference key="2">
    <citation type="journal article" date="2005" name="Nature">
        <title>The map-based sequence of the rice genome.</title>
        <authorList>
            <consortium name="International rice genome sequencing project (IRGSP)"/>
        </authorList>
    </citation>
    <scope>NUCLEOTIDE SEQUENCE [LARGE SCALE GENOMIC DNA]</scope>
    <source>
        <strain>cv. Nipponbare</strain>
    </source>
</reference>
<reference key="3">
    <citation type="journal article" date="2008" name="Nucleic Acids Res.">
        <title>The rice annotation project database (RAP-DB): 2008 update.</title>
        <authorList>
            <consortium name="The rice annotation project (RAP)"/>
        </authorList>
    </citation>
    <scope>GENOME REANNOTATION</scope>
    <source>
        <strain>cv. Nipponbare</strain>
    </source>
</reference>
<reference key="4">
    <citation type="journal article" date="2013" name="Rice">
        <title>Improvement of the Oryza sativa Nipponbare reference genome using next generation sequence and optical map data.</title>
        <authorList>
            <person name="Kawahara Y."/>
            <person name="de la Bastide M."/>
            <person name="Hamilton J.P."/>
            <person name="Kanamori H."/>
            <person name="McCombie W.R."/>
            <person name="Ouyang S."/>
            <person name="Schwartz D.C."/>
            <person name="Tanaka T."/>
            <person name="Wu J."/>
            <person name="Zhou S."/>
            <person name="Childs K.L."/>
            <person name="Davidson R.M."/>
            <person name="Lin H."/>
            <person name="Quesada-Ocampo L."/>
            <person name="Vaillancourt B."/>
            <person name="Sakai H."/>
            <person name="Lee S.S."/>
            <person name="Kim J."/>
            <person name="Numa H."/>
            <person name="Itoh T."/>
            <person name="Buell C.R."/>
            <person name="Matsumoto T."/>
        </authorList>
    </citation>
    <scope>GENOME REANNOTATION</scope>
    <source>
        <strain>cv. Nipponbare</strain>
    </source>
</reference>
<reference key="5">
    <citation type="journal article" date="2003" name="Science">
        <title>Collection, mapping, and annotation of over 28,000 cDNA clones from japonica rice.</title>
        <authorList>
            <consortium name="The rice full-length cDNA consortium"/>
        </authorList>
    </citation>
    <scope>NUCLEOTIDE SEQUENCE [LARGE SCALE MRNA]</scope>
    <source>
        <strain>cv. Nipponbare</strain>
    </source>
</reference>
<reference key="6">
    <citation type="journal article" date="2007" name="J. Biol. Chem.">
        <title>Calcium-activated (p)ppGpp synthetase in chloroplasts of land plants.</title>
        <authorList>
            <person name="Tozawa Y."/>
            <person name="Nozawa A."/>
            <person name="Kanno T."/>
            <person name="Narisawa T."/>
            <person name="Masuda S."/>
            <person name="Kasai K."/>
            <person name="Nanamiya H."/>
        </authorList>
    </citation>
    <scope>FUNCTION</scope>
    <scope>CATALYTIC ACTIVITY</scope>
    <scope>ACTIVITY REGULATION</scope>
    <scope>DOMAIN</scope>
    <scope>TISSUE SPECIFICITY</scope>
</reference>
<comment type="function">
    <text evidence="4">Possesses calcium-dependent ppGpp (guanosine 3'-diphosphate 5'-diphosphate) synthetase activity in vitro and is able to functionally complement E.coli relA mutants. May be involved in a rapid plant ppGpp-mediated response to pathogens and other stresses.</text>
</comment>
<comment type="catalytic activity">
    <reaction evidence="4">
        <text>GTP + ATP = guanosine 3'-diphosphate 5'-triphosphate + AMP</text>
        <dbReference type="Rhea" id="RHEA:22088"/>
        <dbReference type="ChEBI" id="CHEBI:30616"/>
        <dbReference type="ChEBI" id="CHEBI:37565"/>
        <dbReference type="ChEBI" id="CHEBI:142410"/>
        <dbReference type="ChEBI" id="CHEBI:456215"/>
        <dbReference type="EC" id="2.7.6.5"/>
    </reaction>
    <physiologicalReaction direction="right-to-left" evidence="4">
        <dbReference type="Rhea" id="RHEA:22090"/>
    </physiologicalReaction>
</comment>
<comment type="activity regulation">
    <text evidence="4">Activated by calcium.</text>
</comment>
<comment type="subcellular location">
    <subcellularLocation>
        <location evidence="1">Plastid</location>
        <location evidence="1">Chloroplast</location>
    </subcellularLocation>
</comment>
<comment type="tissue specificity">
    <text evidence="4">Expressed in shoots.</text>
</comment>
<comment type="domain">
    <text evidence="7">The calcium-binding sites of the 2 EF-hand domains are required for enzyme activity.</text>
</comment>
<comment type="similarity">
    <text evidence="6">Belongs to the RelA/SpoT family.</text>
</comment>
<keyword id="KW-0067">ATP-binding</keyword>
<keyword id="KW-0106">Calcium</keyword>
<keyword id="KW-0150">Chloroplast</keyword>
<keyword id="KW-0342">GTP-binding</keyword>
<keyword id="KW-0418">Kinase</keyword>
<keyword id="KW-0479">Metal-binding</keyword>
<keyword id="KW-0547">Nucleotide-binding</keyword>
<keyword id="KW-0934">Plastid</keyword>
<keyword id="KW-1185">Reference proteome</keyword>
<keyword id="KW-0677">Repeat</keyword>
<keyword id="KW-0346">Stress response</keyword>
<keyword id="KW-0808">Transferase</keyword>
<keyword id="KW-0809">Transit peptide</keyword>
<protein>
    <recommendedName>
        <fullName evidence="6">GTP diphosphokinase CRSH2, chloroplastic</fullName>
        <ecNumber evidence="4">2.7.6.5</ecNumber>
    </recommendedName>
    <alternativeName>
        <fullName evidence="5">Calcium-activated RelA/Spot homolog 2</fullName>
        <shortName evidence="5">OsCRSH2</shortName>
    </alternativeName>
    <alternativeName>
        <fullName evidence="5">ppGpp synthetase CRSH2</fullName>
    </alternativeName>
</protein>
<proteinExistence type="evidence at protein level"/>
<gene>
    <name evidence="5" type="primary">CRSH2</name>
    <name evidence="9" type="ordered locus">Os05g0161500</name>
    <name evidence="6" type="ordered locus">LOC_Os05g06920</name>
    <name evidence="8" type="ORF">OSJNBa0034O12.17</name>
</gene>
<evidence type="ECO:0000255" key="1"/>
<evidence type="ECO:0000255" key="2">
    <source>
        <dbReference type="PROSITE-ProRule" id="PRU00448"/>
    </source>
</evidence>
<evidence type="ECO:0000255" key="3">
    <source>
        <dbReference type="PROSITE-ProRule" id="PRU01175"/>
    </source>
</evidence>
<evidence type="ECO:0000269" key="4">
    <source>
    </source>
</evidence>
<evidence type="ECO:0000303" key="5">
    <source>
    </source>
</evidence>
<evidence type="ECO:0000305" key="6"/>
<evidence type="ECO:0000305" key="7">
    <source>
    </source>
</evidence>
<evidence type="ECO:0000312" key="8">
    <source>
        <dbReference type="EMBL" id="AAT93922.1"/>
    </source>
</evidence>
<evidence type="ECO:0000312" key="9">
    <source>
        <dbReference type="EMBL" id="BAS92406.1"/>
    </source>
</evidence>
<name>CRSH2_ORYSJ</name>
<feature type="transit peptide" description="Chloroplast" evidence="1">
    <location>
        <begin position="1"/>
        <end position="37"/>
    </location>
</feature>
<feature type="chain" id="PRO_0000429855" description="GTP diphosphokinase CRSH2, chloroplastic">
    <location>
        <begin position="38"/>
        <end position="559"/>
    </location>
</feature>
<feature type="domain" description="HD" evidence="3">
    <location>
        <begin position="87"/>
        <end position="187"/>
    </location>
</feature>
<feature type="domain" description="EF-hand 1" evidence="2">
    <location>
        <begin position="449"/>
        <end position="484"/>
    </location>
</feature>
<feature type="domain" description="EF-hand 2" evidence="2">
    <location>
        <begin position="486"/>
        <end position="518"/>
    </location>
</feature>
<feature type="binding site" evidence="2">
    <location>
        <position position="462"/>
    </location>
    <ligand>
        <name>Ca(2+)</name>
        <dbReference type="ChEBI" id="CHEBI:29108"/>
        <label>1</label>
    </ligand>
</feature>
<feature type="binding site" evidence="2">
    <location>
        <position position="464"/>
    </location>
    <ligand>
        <name>Ca(2+)</name>
        <dbReference type="ChEBI" id="CHEBI:29108"/>
        <label>1</label>
    </ligand>
</feature>
<feature type="binding site" evidence="2">
    <location>
        <position position="466"/>
    </location>
    <ligand>
        <name>Ca(2+)</name>
        <dbReference type="ChEBI" id="CHEBI:29108"/>
        <label>1</label>
    </ligand>
</feature>
<feature type="binding site" evidence="2">
    <location>
        <position position="468"/>
    </location>
    <ligand>
        <name>Ca(2+)</name>
        <dbReference type="ChEBI" id="CHEBI:29108"/>
        <label>1</label>
    </ligand>
</feature>
<feature type="binding site" evidence="2">
    <location>
        <position position="473"/>
    </location>
    <ligand>
        <name>Ca(2+)</name>
        <dbReference type="ChEBI" id="CHEBI:29108"/>
        <label>1</label>
    </ligand>
</feature>
<feature type="binding site" evidence="2">
    <location>
        <position position="496"/>
    </location>
    <ligand>
        <name>Ca(2+)</name>
        <dbReference type="ChEBI" id="CHEBI:29108"/>
        <label>2</label>
    </ligand>
</feature>
<feature type="binding site" evidence="2">
    <location>
        <position position="498"/>
    </location>
    <ligand>
        <name>Ca(2+)</name>
        <dbReference type="ChEBI" id="CHEBI:29108"/>
        <label>2</label>
    </ligand>
</feature>
<feature type="binding site" evidence="2">
    <location>
        <position position="500"/>
    </location>
    <ligand>
        <name>Ca(2+)</name>
        <dbReference type="ChEBI" id="CHEBI:29108"/>
        <label>2</label>
    </ligand>
</feature>
<feature type="binding site" evidence="2">
    <location>
        <position position="502"/>
    </location>
    <ligand>
        <name>Ca(2+)</name>
        <dbReference type="ChEBI" id="CHEBI:29108"/>
        <label>2</label>
    </ligand>
</feature>
<feature type="binding site" evidence="2">
    <location>
        <position position="507"/>
    </location>
    <ligand>
        <name>Ca(2+)</name>
        <dbReference type="ChEBI" id="CHEBI:29108"/>
        <label>2</label>
    </ligand>
</feature>
<accession>Q6ATB2</accession>
<accession>A0A0P0WIN5</accession>